<proteinExistence type="evidence at protein level"/>
<comment type="function">
    <text evidence="3">Catalyzes the conversion of 7,8-dihydroneopterin into 6-hydroxymethyl-7,8-dihydropterin, a biosynthetic precursor of the vitamin tetrahydrofolate. Can use L-threo-dihydroneopterin and D-erythro-dihydroneopterin as substrates for the formation of 6-hydroxymethyldihydropterin, but it can also catalyze the epimerization of carbon 2' of dihydroneopterin and dihydromonapterin.</text>
</comment>
<comment type="catalytic activity">
    <reaction evidence="3">
        <text>7,8-dihydroneopterin = 6-hydroxymethyl-7,8-dihydropterin + glycolaldehyde</text>
        <dbReference type="Rhea" id="RHEA:10540"/>
        <dbReference type="ChEBI" id="CHEBI:17001"/>
        <dbReference type="ChEBI" id="CHEBI:17071"/>
        <dbReference type="ChEBI" id="CHEBI:44841"/>
        <dbReference type="EC" id="4.1.2.25"/>
    </reaction>
</comment>
<comment type="pathway">
    <text evidence="5">Cofactor biosynthesis; tetrahydrofolate biosynthesis; 2-amino-4-hydroxy-6-hydroxymethyl-7,8-dihydropteridine diphosphate from 7,8-dihydroneopterin triphosphate: step 3/4.</text>
</comment>
<comment type="subunit">
    <text evidence="2">Homooctamer. Forms a hollow cylinder assembled from two ring-shaped tetramers.</text>
</comment>
<comment type="tissue specificity">
    <text evidence="3">Expressed in roots, leaves, stems and siliques.</text>
</comment>
<comment type="similarity">
    <text evidence="5">Belongs to the DHNA family.</text>
</comment>
<accession>Q9FM54</accession>
<gene>
    <name evidence="4" type="primary">FOLB2</name>
    <name evidence="6" type="ordered locus">At5g62980</name>
    <name evidence="7" type="ORF">MJH22.3</name>
</gene>
<keyword id="KW-0289">Folate biosynthesis</keyword>
<keyword id="KW-0456">Lyase</keyword>
<keyword id="KW-1185">Reference proteome</keyword>
<evidence type="ECO:0000250" key="1">
    <source>
        <dbReference type="UniProtKB" id="P0AC16"/>
    </source>
</evidence>
<evidence type="ECO:0000250" key="2">
    <source>
        <dbReference type="UniProtKB" id="Q9SF23"/>
    </source>
</evidence>
<evidence type="ECO:0000269" key="3">
    <source>
    </source>
</evidence>
<evidence type="ECO:0000303" key="4">
    <source>
    </source>
</evidence>
<evidence type="ECO:0000305" key="5"/>
<evidence type="ECO:0000312" key="6">
    <source>
        <dbReference type="Araport" id="AT5G62980"/>
    </source>
</evidence>
<evidence type="ECO:0000312" key="7">
    <source>
        <dbReference type="EMBL" id="BAB08841.1"/>
    </source>
</evidence>
<protein>
    <recommendedName>
        <fullName evidence="5">Dihydroneopterin aldolase 2</fullName>
        <shortName evidence="5">DHNA2</shortName>
        <ecNumber evidence="3">4.1.2.25</ecNumber>
    </recommendedName>
    <alternativeName>
        <fullName>7,8-dihydroneopterin aldolase</fullName>
    </alternativeName>
    <alternativeName>
        <fullName evidence="4">AtFolB2</fullName>
    </alternativeName>
</protein>
<organism>
    <name type="scientific">Arabidopsis thaliana</name>
    <name type="common">Mouse-ear cress</name>
    <dbReference type="NCBI Taxonomy" id="3702"/>
    <lineage>
        <taxon>Eukaryota</taxon>
        <taxon>Viridiplantae</taxon>
        <taxon>Streptophyta</taxon>
        <taxon>Embryophyta</taxon>
        <taxon>Tracheophyta</taxon>
        <taxon>Spermatophyta</taxon>
        <taxon>Magnoliopsida</taxon>
        <taxon>eudicotyledons</taxon>
        <taxon>Gunneridae</taxon>
        <taxon>Pentapetalae</taxon>
        <taxon>rosids</taxon>
        <taxon>malvids</taxon>
        <taxon>Brassicales</taxon>
        <taxon>Brassicaceae</taxon>
        <taxon>Camelineae</taxon>
        <taxon>Arabidopsis</taxon>
    </lineage>
</organism>
<reference key="1">
    <citation type="journal article" date="1998" name="DNA Res.">
        <title>Structural analysis of Arabidopsis thaliana chromosome 5. IV. Sequence features of the regions of 1,456,315 bp covered by nineteen physically assigned P1 and TAC clones.</title>
        <authorList>
            <person name="Sato S."/>
            <person name="Kaneko T."/>
            <person name="Kotani H."/>
            <person name="Nakamura Y."/>
            <person name="Asamizu E."/>
            <person name="Miyajima N."/>
            <person name="Tabata S."/>
        </authorList>
    </citation>
    <scope>NUCLEOTIDE SEQUENCE [LARGE SCALE GENOMIC DNA]</scope>
    <source>
        <strain>cv. Columbia</strain>
    </source>
</reference>
<reference key="2">
    <citation type="journal article" date="2017" name="Plant J.">
        <title>Araport11: a complete reannotation of the Arabidopsis thaliana reference genome.</title>
        <authorList>
            <person name="Cheng C.Y."/>
            <person name="Krishnakumar V."/>
            <person name="Chan A.P."/>
            <person name="Thibaud-Nissen F."/>
            <person name="Schobel S."/>
            <person name="Town C.D."/>
        </authorList>
    </citation>
    <scope>GENOME REANNOTATION</scope>
    <source>
        <strain>cv. Columbia</strain>
    </source>
</reference>
<reference key="3">
    <citation type="journal article" date="2003" name="Science">
        <title>Empirical analysis of transcriptional activity in the Arabidopsis genome.</title>
        <authorList>
            <person name="Yamada K."/>
            <person name="Lim J."/>
            <person name="Dale J.M."/>
            <person name="Chen H."/>
            <person name="Shinn P."/>
            <person name="Palm C.J."/>
            <person name="Southwick A.M."/>
            <person name="Wu H.C."/>
            <person name="Kim C.J."/>
            <person name="Nguyen M."/>
            <person name="Pham P.K."/>
            <person name="Cheuk R.F."/>
            <person name="Karlin-Newmann G."/>
            <person name="Liu S.X."/>
            <person name="Lam B."/>
            <person name="Sakano H."/>
            <person name="Wu T."/>
            <person name="Yu G."/>
            <person name="Miranda M."/>
            <person name="Quach H.L."/>
            <person name="Tripp M."/>
            <person name="Chang C.H."/>
            <person name="Lee J.M."/>
            <person name="Toriumi M.J."/>
            <person name="Chan M.M."/>
            <person name="Tang C.C."/>
            <person name="Onodera C.S."/>
            <person name="Deng J.M."/>
            <person name="Akiyama K."/>
            <person name="Ansari Y."/>
            <person name="Arakawa T."/>
            <person name="Banh J."/>
            <person name="Banno F."/>
            <person name="Bowser L."/>
            <person name="Brooks S.Y."/>
            <person name="Carninci P."/>
            <person name="Chao Q."/>
            <person name="Choy N."/>
            <person name="Enju A."/>
            <person name="Goldsmith A.D."/>
            <person name="Gurjal M."/>
            <person name="Hansen N.F."/>
            <person name="Hayashizaki Y."/>
            <person name="Johnson-Hopson C."/>
            <person name="Hsuan V.W."/>
            <person name="Iida K."/>
            <person name="Karnes M."/>
            <person name="Khan S."/>
            <person name="Koesema E."/>
            <person name="Ishida J."/>
            <person name="Jiang P.X."/>
            <person name="Jones T."/>
            <person name="Kawai J."/>
            <person name="Kamiya A."/>
            <person name="Meyers C."/>
            <person name="Nakajima M."/>
            <person name="Narusaka M."/>
            <person name="Seki M."/>
            <person name="Sakurai T."/>
            <person name="Satou M."/>
            <person name="Tamse R."/>
            <person name="Vaysberg M."/>
            <person name="Wallender E.K."/>
            <person name="Wong C."/>
            <person name="Yamamura Y."/>
            <person name="Yuan S."/>
            <person name="Shinozaki K."/>
            <person name="Davis R.W."/>
            <person name="Theologis A."/>
            <person name="Ecker J.R."/>
        </authorList>
    </citation>
    <scope>NUCLEOTIDE SEQUENCE [LARGE SCALE MRNA]</scope>
    <source>
        <strain>cv. Columbia</strain>
    </source>
</reference>
<reference key="4">
    <citation type="submission" date="2004-06" db="EMBL/GenBank/DDBJ databases">
        <title>Arabidopsis ORF clones.</title>
        <authorList>
            <person name="Cheuk R.F."/>
            <person name="Chen H."/>
            <person name="Kim C.J."/>
            <person name="Shinn P."/>
            <person name="Ecker J.R."/>
        </authorList>
    </citation>
    <scope>NUCLEOTIDE SEQUENCE [LARGE SCALE MRNA]</scope>
    <source>
        <strain>cv. Columbia</strain>
    </source>
</reference>
<reference key="5">
    <citation type="journal article" date="2004" name="Plant Physiol.">
        <title>Folate biosynthesis in higher plants. cDNA cloning, heterologous expression, and characterization of dihydroneopterin aldolases.</title>
        <authorList>
            <person name="Goyer A."/>
            <person name="Illarionova V."/>
            <person name="Roje S."/>
            <person name="Fischer M."/>
            <person name="Bacher A."/>
            <person name="Hanson A.D."/>
        </authorList>
    </citation>
    <scope>FUNCTION</scope>
    <scope>CATALYTIC ACTIVITY</scope>
    <scope>TISSUE SPECIFICITY</scope>
</reference>
<dbReference type="EC" id="4.1.2.25" evidence="3"/>
<dbReference type="EMBL" id="AB009051">
    <property type="protein sequence ID" value="BAB08841.1"/>
    <property type="molecule type" value="Genomic_DNA"/>
</dbReference>
<dbReference type="EMBL" id="CP002688">
    <property type="protein sequence ID" value="AED97682.1"/>
    <property type="molecule type" value="Genomic_DNA"/>
</dbReference>
<dbReference type="EMBL" id="CP002688">
    <property type="protein sequence ID" value="ANM70563.1"/>
    <property type="molecule type" value="Genomic_DNA"/>
</dbReference>
<dbReference type="EMBL" id="BT003970">
    <property type="protein sequence ID" value="AAO42014.1"/>
    <property type="molecule type" value="mRNA"/>
</dbReference>
<dbReference type="EMBL" id="BT014860">
    <property type="protein sequence ID" value="AAT41843.1"/>
    <property type="molecule type" value="mRNA"/>
</dbReference>
<dbReference type="RefSeq" id="NP_001332160.1">
    <property type="nucleotide sequence ID" value="NM_001345573.1"/>
</dbReference>
<dbReference type="RefSeq" id="NP_201103.1">
    <property type="nucleotide sequence ID" value="NM_125692.4"/>
</dbReference>
<dbReference type="SMR" id="Q9FM54"/>
<dbReference type="FunCoup" id="Q9FM54">
    <property type="interactions" value="292"/>
</dbReference>
<dbReference type="STRING" id="3702.Q9FM54"/>
<dbReference type="PaxDb" id="3702-AT5G62980.1"/>
<dbReference type="ProteomicsDB" id="228915"/>
<dbReference type="EnsemblPlants" id="AT5G62980.1">
    <property type="protein sequence ID" value="AT5G62980.1"/>
    <property type="gene ID" value="AT5G62980"/>
</dbReference>
<dbReference type="EnsemblPlants" id="AT5G62980.2">
    <property type="protein sequence ID" value="AT5G62980.2"/>
    <property type="gene ID" value="AT5G62980"/>
</dbReference>
<dbReference type="GeneID" id="836418"/>
<dbReference type="Gramene" id="AT5G62980.1">
    <property type="protein sequence ID" value="AT5G62980.1"/>
    <property type="gene ID" value="AT5G62980"/>
</dbReference>
<dbReference type="Gramene" id="AT5G62980.2">
    <property type="protein sequence ID" value="AT5G62980.2"/>
    <property type="gene ID" value="AT5G62980"/>
</dbReference>
<dbReference type="KEGG" id="ath:AT5G62980"/>
<dbReference type="Araport" id="AT5G62980"/>
<dbReference type="TAIR" id="AT5G62980">
    <property type="gene designation" value="FOLB2"/>
</dbReference>
<dbReference type="eggNOG" id="ENOG502RZV8">
    <property type="taxonomic scope" value="Eukaryota"/>
</dbReference>
<dbReference type="HOGENOM" id="CLU_112632_1_0_1"/>
<dbReference type="InParanoid" id="Q9FM54"/>
<dbReference type="OMA" id="MLDIDAW"/>
<dbReference type="OrthoDB" id="1863886at2759"/>
<dbReference type="PhylomeDB" id="Q9FM54"/>
<dbReference type="BioCyc" id="ARA:AT5G62980-MONOMER"/>
<dbReference type="BRENDA" id="4.1.2.25">
    <property type="organism ID" value="399"/>
</dbReference>
<dbReference type="BRENDA" id="5.1.99.8">
    <property type="organism ID" value="399"/>
</dbReference>
<dbReference type="UniPathway" id="UPA00077">
    <property type="reaction ID" value="UER00154"/>
</dbReference>
<dbReference type="PRO" id="PR:Q9FM54"/>
<dbReference type="Proteomes" id="UP000006548">
    <property type="component" value="Chromosome 5"/>
</dbReference>
<dbReference type="ExpressionAtlas" id="Q9FM54">
    <property type="expression patterns" value="baseline and differential"/>
</dbReference>
<dbReference type="GO" id="GO:0004150">
    <property type="term" value="F:dihydroneopterin aldolase activity"/>
    <property type="evidence" value="ECO:0000314"/>
    <property type="project" value="TAIR"/>
</dbReference>
<dbReference type="GO" id="GO:0046656">
    <property type="term" value="P:folic acid biosynthetic process"/>
    <property type="evidence" value="ECO:0007669"/>
    <property type="project" value="UniProtKB-KW"/>
</dbReference>
<dbReference type="GO" id="GO:0046654">
    <property type="term" value="P:tetrahydrofolate biosynthetic process"/>
    <property type="evidence" value="ECO:0007669"/>
    <property type="project" value="UniProtKB-UniPathway"/>
</dbReference>
<dbReference type="CDD" id="cd00534">
    <property type="entry name" value="DHNA_DHNTPE"/>
    <property type="match status" value="1"/>
</dbReference>
<dbReference type="FunFam" id="3.30.1130.10:FF:000003">
    <property type="entry name" value="7,8-dihydroneopterin aldolase"/>
    <property type="match status" value="1"/>
</dbReference>
<dbReference type="Gene3D" id="3.30.1130.10">
    <property type="match status" value="1"/>
</dbReference>
<dbReference type="InterPro" id="IPR006156">
    <property type="entry name" value="Dihydroneopterin_aldolase"/>
</dbReference>
<dbReference type="InterPro" id="IPR006157">
    <property type="entry name" value="FolB_dom"/>
</dbReference>
<dbReference type="InterPro" id="IPR043133">
    <property type="entry name" value="GTP-CH-I_C/QueF"/>
</dbReference>
<dbReference type="NCBIfam" id="TIGR00525">
    <property type="entry name" value="folB"/>
    <property type="match status" value="1"/>
</dbReference>
<dbReference type="NCBIfam" id="TIGR00526">
    <property type="entry name" value="folB_dom"/>
    <property type="match status" value="1"/>
</dbReference>
<dbReference type="PANTHER" id="PTHR42844">
    <property type="entry name" value="DIHYDRONEOPTERIN ALDOLASE 1-RELATED"/>
    <property type="match status" value="1"/>
</dbReference>
<dbReference type="PANTHER" id="PTHR42844:SF1">
    <property type="entry name" value="DIHYDRONEOPTERIN ALDOLASE 1-RELATED"/>
    <property type="match status" value="1"/>
</dbReference>
<dbReference type="Pfam" id="PF02152">
    <property type="entry name" value="FolB"/>
    <property type="match status" value="1"/>
</dbReference>
<dbReference type="SMART" id="SM00905">
    <property type="entry name" value="FolB"/>
    <property type="match status" value="1"/>
</dbReference>
<dbReference type="SUPFAM" id="SSF55620">
    <property type="entry name" value="Tetrahydrobiopterin biosynthesis enzymes-like"/>
    <property type="match status" value="1"/>
</dbReference>
<sequence>MEKDMAMMGDKLILRGLKFYGFHGAIPEEKTLGQMFMLDIDAWMCLKKAGLSDNLADSVSYVDIYNVAKEVVEGSSRNLLERVAGLIASKTLEISPRITAVRVKLWKPNVALIQSTIDYLGVEIFRDRATE</sequence>
<name>FOLB2_ARATH</name>
<feature type="chain" id="PRO_0000431446" description="Dihydroneopterin aldolase 2">
    <location>
        <begin position="1"/>
        <end position="131"/>
    </location>
</feature>
<feature type="active site" description="Proton donor/acceptor" evidence="2">
    <location>
        <position position="107"/>
    </location>
</feature>
<feature type="binding site" evidence="1">
    <location>
        <position position="29"/>
    </location>
    <ligand>
        <name>substrate</name>
    </ligand>
</feature>
<feature type="binding site" evidence="1">
    <location>
        <position position="61"/>
    </location>
    <ligand>
        <name>substrate</name>
    </ligand>
</feature>
<feature type="binding site" evidence="1">
    <location>
        <begin position="80"/>
        <end position="81"/>
    </location>
    <ligand>
        <name>substrate</name>
    </ligand>
</feature>